<sequence length="194" mass="20460">MSRWTHRTFFIALSAIVTTAGFGSSGCAHGNSSTSESAVPSTFPGISSSITAPPATGLPAPEVLTNVLSRLADPNIPGIDKLPLIESATPDSAVTLDKFSNALRDNGYLPMTFTANNIAWSNKNPSDVLATISVNIAQTNNSVFSFPMEFTPFPPPQQSWQLSKRTADMLLEFGNSSGLTNPAPIKAPTPTPSH</sequence>
<dbReference type="EMBL" id="U00017">
    <property type="protein sequence ID" value="AAA17217.1"/>
    <property type="molecule type" value="Genomic_DNA"/>
</dbReference>
<dbReference type="EMBL" id="AL035310">
    <property type="protein sequence ID" value="CAA22925.1"/>
    <property type="molecule type" value="Genomic_DNA"/>
</dbReference>
<dbReference type="EMBL" id="AL583921">
    <property type="protein sequence ID" value="CAC31696.1"/>
    <property type="molecule type" value="Genomic_DNA"/>
</dbReference>
<dbReference type="PIR" id="S72877">
    <property type="entry name" value="S72877"/>
</dbReference>
<dbReference type="RefSeq" id="NP_301946.1">
    <property type="nucleotide sequence ID" value="NC_002677.1"/>
</dbReference>
<dbReference type="RefSeq" id="WP_010908267.1">
    <property type="nucleotide sequence ID" value="NC_002677.1"/>
</dbReference>
<dbReference type="SMR" id="Q49803"/>
<dbReference type="STRING" id="272631.gene:17575149"/>
<dbReference type="KEGG" id="mle:ML1315"/>
<dbReference type="PATRIC" id="fig|272631.5.peg.2426"/>
<dbReference type="Leproma" id="ML1315"/>
<dbReference type="eggNOG" id="ENOG5030NVW">
    <property type="taxonomic scope" value="Bacteria"/>
</dbReference>
<dbReference type="HOGENOM" id="CLU_084151_2_0_11"/>
<dbReference type="OrthoDB" id="4752301at2"/>
<dbReference type="Proteomes" id="UP000000806">
    <property type="component" value="Chromosome"/>
</dbReference>
<dbReference type="GO" id="GO:0005886">
    <property type="term" value="C:plasma membrane"/>
    <property type="evidence" value="ECO:0007669"/>
    <property type="project" value="UniProtKB-SubCell"/>
</dbReference>
<dbReference type="PROSITE" id="PS51257">
    <property type="entry name" value="PROKAR_LIPOPROTEIN"/>
    <property type="match status" value="1"/>
</dbReference>
<protein>
    <recommendedName>
        <fullName>Putative lipoprotein LppK</fullName>
    </recommendedName>
</protein>
<gene>
    <name type="primary">lppK</name>
    <name type="ordered locus">ML1315</name>
    <name type="ORF">B2126_F3_115</name>
    <name type="ORF">MLCB2533.11c</name>
</gene>
<organism>
    <name type="scientific">Mycobacterium leprae (strain TN)</name>
    <dbReference type="NCBI Taxonomy" id="272631"/>
    <lineage>
        <taxon>Bacteria</taxon>
        <taxon>Bacillati</taxon>
        <taxon>Actinomycetota</taxon>
        <taxon>Actinomycetes</taxon>
        <taxon>Mycobacteriales</taxon>
        <taxon>Mycobacteriaceae</taxon>
        <taxon>Mycobacterium</taxon>
    </lineage>
</organism>
<feature type="signal peptide" evidence="1">
    <location>
        <begin position="1"/>
        <end position="26"/>
    </location>
</feature>
<feature type="chain" id="PRO_0000018110" description="Putative lipoprotein LppK">
    <location>
        <begin position="27"/>
        <end position="194"/>
    </location>
</feature>
<feature type="region of interest" description="Disordered" evidence="2">
    <location>
        <begin position="174"/>
        <end position="194"/>
    </location>
</feature>
<feature type="compositionally biased region" description="Pro residues" evidence="2">
    <location>
        <begin position="185"/>
        <end position="194"/>
    </location>
</feature>
<feature type="lipid moiety-binding region" description="N-palmitoyl cysteine" evidence="1">
    <location>
        <position position="27"/>
    </location>
</feature>
<feature type="lipid moiety-binding region" description="S-diacylglycerol cysteine" evidence="1">
    <location>
        <position position="27"/>
    </location>
</feature>
<reference key="1">
    <citation type="submission" date="1994-03" db="EMBL/GenBank/DDBJ databases">
        <authorList>
            <person name="Smith D.R."/>
            <person name="Robison K."/>
        </authorList>
    </citation>
    <scope>NUCLEOTIDE SEQUENCE [GENOMIC DNA]</scope>
</reference>
<reference key="2">
    <citation type="journal article" date="2001" name="Nature">
        <title>Massive gene decay in the leprosy bacillus.</title>
        <authorList>
            <person name="Cole S.T."/>
            <person name="Eiglmeier K."/>
            <person name="Parkhill J."/>
            <person name="James K.D."/>
            <person name="Thomson N.R."/>
            <person name="Wheeler P.R."/>
            <person name="Honore N."/>
            <person name="Garnier T."/>
            <person name="Churcher C.M."/>
            <person name="Harris D.E."/>
            <person name="Mungall K.L."/>
            <person name="Basham D."/>
            <person name="Brown D."/>
            <person name="Chillingworth T."/>
            <person name="Connor R."/>
            <person name="Davies R.M."/>
            <person name="Devlin K."/>
            <person name="Duthoy S."/>
            <person name="Feltwell T."/>
            <person name="Fraser A."/>
            <person name="Hamlin N."/>
            <person name="Holroyd S."/>
            <person name="Hornsby T."/>
            <person name="Jagels K."/>
            <person name="Lacroix C."/>
            <person name="Maclean J."/>
            <person name="Moule S."/>
            <person name="Murphy L.D."/>
            <person name="Oliver K."/>
            <person name="Quail M.A."/>
            <person name="Rajandream M.A."/>
            <person name="Rutherford K.M."/>
            <person name="Rutter S."/>
            <person name="Seeger K."/>
            <person name="Simon S."/>
            <person name="Simmonds M."/>
            <person name="Skelton J."/>
            <person name="Squares R."/>
            <person name="Squares S."/>
            <person name="Stevens K."/>
            <person name="Taylor K."/>
            <person name="Whitehead S."/>
            <person name="Woodward J.R."/>
            <person name="Barrell B.G."/>
        </authorList>
    </citation>
    <scope>NUCLEOTIDE SEQUENCE [LARGE SCALE GENOMIC DNA]</scope>
    <source>
        <strain>TN</strain>
    </source>
</reference>
<evidence type="ECO:0000255" key="1">
    <source>
        <dbReference type="PROSITE-ProRule" id="PRU00303"/>
    </source>
</evidence>
<evidence type="ECO:0000256" key="2">
    <source>
        <dbReference type="SAM" id="MobiDB-lite"/>
    </source>
</evidence>
<evidence type="ECO:0000305" key="3"/>
<comment type="subcellular location">
    <subcellularLocation>
        <location evidence="1">Cell membrane</location>
        <topology evidence="1">Lipid-anchor</topology>
    </subcellularLocation>
</comment>
<comment type="similarity">
    <text evidence="3">Belongs to the MTB12 family.</text>
</comment>
<name>LPPK_MYCLE</name>
<keyword id="KW-1003">Cell membrane</keyword>
<keyword id="KW-0449">Lipoprotein</keyword>
<keyword id="KW-0472">Membrane</keyword>
<keyword id="KW-0564">Palmitate</keyword>
<keyword id="KW-1185">Reference proteome</keyword>
<keyword id="KW-0732">Signal</keyword>
<accession>Q49803</accession>
<proteinExistence type="inferred from homology"/>